<accession>Q96LT7</accession>
<accession>A8K5W0</accession>
<accession>D3DRK6</accession>
<accession>G8I0B6</accession>
<accession>Q6NUS9</accession>
<organism>
    <name type="scientific">Homo sapiens</name>
    <name type="common">Human</name>
    <dbReference type="NCBI Taxonomy" id="9606"/>
    <lineage>
        <taxon>Eukaryota</taxon>
        <taxon>Metazoa</taxon>
        <taxon>Chordata</taxon>
        <taxon>Craniata</taxon>
        <taxon>Vertebrata</taxon>
        <taxon>Euteleostomi</taxon>
        <taxon>Mammalia</taxon>
        <taxon>Eutheria</taxon>
        <taxon>Euarchontoglires</taxon>
        <taxon>Primates</taxon>
        <taxon>Haplorrhini</taxon>
        <taxon>Catarrhini</taxon>
        <taxon>Hominidae</taxon>
        <taxon>Homo</taxon>
    </lineage>
</organism>
<gene>
    <name evidence="25" type="primary">C9orf72</name>
    <name evidence="25" type="synonym">DENND9</name>
    <name evidence="25" type="synonym">DENNL72</name>
</gene>
<keyword id="KW-0002">3D-structure</keyword>
<keyword id="KW-0025">Alternative splicing</keyword>
<keyword id="KW-0036">Amyotrophic lateral sclerosis</keyword>
<keyword id="KW-0072">Autophagy</keyword>
<keyword id="KW-0966">Cell projection</keyword>
<keyword id="KW-0963">Cytoplasm</keyword>
<keyword id="KW-0968">Cytoplasmic vesicle</keyword>
<keyword id="KW-0967">Endosome</keyword>
<keyword id="KW-0344">Guanine-nucleotide releasing factor</keyword>
<keyword id="KW-0458">Lysosome</keyword>
<keyword id="KW-0472">Membrane</keyword>
<keyword id="KW-0523">Neurodegeneration</keyword>
<keyword id="KW-0539">Nucleus</keyword>
<keyword id="KW-1267">Proteomics identification</keyword>
<keyword id="KW-1185">Reference proteome</keyword>
<keyword id="KW-0964">Secreted</keyword>
<keyword id="KW-0770">Synapse</keyword>
<evidence type="ECO:0000250" key="1">
    <source>
        <dbReference type="UniProtKB" id="Q6DFW0"/>
    </source>
</evidence>
<evidence type="ECO:0000255" key="2">
    <source>
        <dbReference type="PROSITE-ProRule" id="PRU01179"/>
    </source>
</evidence>
<evidence type="ECO:0000269" key="3">
    <source>
    </source>
</evidence>
<evidence type="ECO:0000269" key="4">
    <source>
    </source>
</evidence>
<evidence type="ECO:0000269" key="5">
    <source>
    </source>
</evidence>
<evidence type="ECO:0000269" key="6">
    <source>
    </source>
</evidence>
<evidence type="ECO:0000269" key="7">
    <source>
    </source>
</evidence>
<evidence type="ECO:0000269" key="8">
    <source>
    </source>
</evidence>
<evidence type="ECO:0000269" key="9">
    <source>
    </source>
</evidence>
<evidence type="ECO:0000269" key="10">
    <source>
    </source>
</evidence>
<evidence type="ECO:0000269" key="11">
    <source>
    </source>
</evidence>
<evidence type="ECO:0000269" key="12">
    <source>
    </source>
</evidence>
<evidence type="ECO:0000269" key="13">
    <source>
    </source>
</evidence>
<evidence type="ECO:0000269" key="14">
    <source>
    </source>
</evidence>
<evidence type="ECO:0000269" key="15">
    <source>
    </source>
</evidence>
<evidence type="ECO:0000269" key="16">
    <source>
    </source>
</evidence>
<evidence type="ECO:0000269" key="17">
    <source>
    </source>
</evidence>
<evidence type="ECO:0000269" key="18">
    <source>
    </source>
</evidence>
<evidence type="ECO:0000269" key="19">
    <source>
    </source>
</evidence>
<evidence type="ECO:0000269" key="20">
    <source>
    </source>
</evidence>
<evidence type="ECO:0000303" key="21">
    <source>
    </source>
</evidence>
<evidence type="ECO:0000303" key="22">
    <source>
    </source>
</evidence>
<evidence type="ECO:0000303" key="23">
    <source>
    </source>
</evidence>
<evidence type="ECO:0000305" key="24"/>
<evidence type="ECO:0000312" key="25">
    <source>
        <dbReference type="HGNC" id="HGNC:28337"/>
    </source>
</evidence>
<evidence type="ECO:0007744" key="26">
    <source>
        <dbReference type="PDB" id="6LT0"/>
    </source>
</evidence>
<evidence type="ECO:0007829" key="27">
    <source>
        <dbReference type="PDB" id="6LT0"/>
    </source>
</evidence>
<evidence type="ECO:0007829" key="28">
    <source>
        <dbReference type="PDB" id="7O2W"/>
    </source>
</evidence>
<reference key="1">
    <citation type="journal article" date="2011" name="Neuron">
        <title>Expanded GGGGCC hexanucleotide repeat in noncoding region of C9orf72 causes chromosome 9p-linked FTD and ALS.</title>
        <authorList>
            <person name="Dejesus-Hernandez M."/>
            <person name="Mackenzie I.R."/>
            <person name="Boeve B.F."/>
            <person name="Boxer A.L."/>
            <person name="Baker M."/>
            <person name="Rutherford N.J."/>
            <person name="Nicholson A.M."/>
            <person name="Finch N.A."/>
            <person name="Flynn H."/>
            <person name="Adamson J."/>
            <person name="Kouri N."/>
            <person name="Wojtas A."/>
            <person name="Sengdy P."/>
            <person name="Hsiung G.Y."/>
            <person name="Karydas A."/>
            <person name="Seeley W.W."/>
            <person name="Josephs K.A."/>
            <person name="Coppola G."/>
            <person name="Geschwind D.H."/>
            <person name="Wszolek Z.K."/>
            <person name="Feldman H."/>
            <person name="Knopman D.S."/>
            <person name="Petersen R.C."/>
            <person name="Miller B.L."/>
            <person name="Dickson D.W."/>
            <person name="Boylan K.B."/>
            <person name="Graff-Radford N.R."/>
            <person name="Rademakers R."/>
        </authorList>
    </citation>
    <scope>NUCLEOTIDE SEQUENCE [MRNA]</scope>
    <scope>INVOLVEMENT IN FTDALS1</scope>
    <scope>SUBCELLULAR LOCATION</scope>
    <scope>TISSUE SPECIFICITY</scope>
    <source>
        <tissue>Frontal cortex</tissue>
    </source>
</reference>
<reference key="2">
    <citation type="journal article" date="2004" name="Nat. Genet.">
        <title>Complete sequencing and characterization of 21,243 full-length human cDNAs.</title>
        <authorList>
            <person name="Ota T."/>
            <person name="Suzuki Y."/>
            <person name="Nishikawa T."/>
            <person name="Otsuki T."/>
            <person name="Sugiyama T."/>
            <person name="Irie R."/>
            <person name="Wakamatsu A."/>
            <person name="Hayashi K."/>
            <person name="Sato H."/>
            <person name="Nagai K."/>
            <person name="Kimura K."/>
            <person name="Makita H."/>
            <person name="Sekine M."/>
            <person name="Obayashi M."/>
            <person name="Nishi T."/>
            <person name="Shibahara T."/>
            <person name="Tanaka T."/>
            <person name="Ishii S."/>
            <person name="Yamamoto J."/>
            <person name="Saito K."/>
            <person name="Kawai Y."/>
            <person name="Isono Y."/>
            <person name="Nakamura Y."/>
            <person name="Nagahari K."/>
            <person name="Murakami K."/>
            <person name="Yasuda T."/>
            <person name="Iwayanagi T."/>
            <person name="Wagatsuma M."/>
            <person name="Shiratori A."/>
            <person name="Sudo H."/>
            <person name="Hosoiri T."/>
            <person name="Kaku Y."/>
            <person name="Kodaira H."/>
            <person name="Kondo H."/>
            <person name="Sugawara M."/>
            <person name="Takahashi M."/>
            <person name="Kanda K."/>
            <person name="Yokoi T."/>
            <person name="Furuya T."/>
            <person name="Kikkawa E."/>
            <person name="Omura Y."/>
            <person name="Abe K."/>
            <person name="Kamihara K."/>
            <person name="Katsuta N."/>
            <person name="Sato K."/>
            <person name="Tanikawa M."/>
            <person name="Yamazaki M."/>
            <person name="Ninomiya K."/>
            <person name="Ishibashi T."/>
            <person name="Yamashita H."/>
            <person name="Murakawa K."/>
            <person name="Fujimori K."/>
            <person name="Tanai H."/>
            <person name="Kimata M."/>
            <person name="Watanabe M."/>
            <person name="Hiraoka S."/>
            <person name="Chiba Y."/>
            <person name="Ishida S."/>
            <person name="Ono Y."/>
            <person name="Takiguchi S."/>
            <person name="Watanabe S."/>
            <person name="Yosida M."/>
            <person name="Hotuta T."/>
            <person name="Kusano J."/>
            <person name="Kanehori K."/>
            <person name="Takahashi-Fujii A."/>
            <person name="Hara H."/>
            <person name="Tanase T.-O."/>
            <person name="Nomura Y."/>
            <person name="Togiya S."/>
            <person name="Komai F."/>
            <person name="Hara R."/>
            <person name="Takeuchi K."/>
            <person name="Arita M."/>
            <person name="Imose N."/>
            <person name="Musashino K."/>
            <person name="Yuuki H."/>
            <person name="Oshima A."/>
            <person name="Sasaki N."/>
            <person name="Aotsuka S."/>
            <person name="Yoshikawa Y."/>
            <person name="Matsunawa H."/>
            <person name="Ichihara T."/>
            <person name="Shiohata N."/>
            <person name="Sano S."/>
            <person name="Moriya S."/>
            <person name="Momiyama H."/>
            <person name="Satoh N."/>
            <person name="Takami S."/>
            <person name="Terashima Y."/>
            <person name="Suzuki O."/>
            <person name="Nakagawa S."/>
            <person name="Senoh A."/>
            <person name="Mizoguchi H."/>
            <person name="Goto Y."/>
            <person name="Shimizu F."/>
            <person name="Wakebe H."/>
            <person name="Hishigaki H."/>
            <person name="Watanabe T."/>
            <person name="Sugiyama A."/>
            <person name="Takemoto M."/>
            <person name="Kawakami B."/>
            <person name="Yamazaki M."/>
            <person name="Watanabe K."/>
            <person name="Kumagai A."/>
            <person name="Itakura S."/>
            <person name="Fukuzumi Y."/>
            <person name="Fujimori Y."/>
            <person name="Komiyama M."/>
            <person name="Tashiro H."/>
            <person name="Tanigami A."/>
            <person name="Fujiwara T."/>
            <person name="Ono T."/>
            <person name="Yamada K."/>
            <person name="Fujii Y."/>
            <person name="Ozaki K."/>
            <person name="Hirao M."/>
            <person name="Ohmori Y."/>
            <person name="Kawabata A."/>
            <person name="Hikiji T."/>
            <person name="Kobatake N."/>
            <person name="Inagaki H."/>
            <person name="Ikema Y."/>
            <person name="Okamoto S."/>
            <person name="Okitani R."/>
            <person name="Kawakami T."/>
            <person name="Noguchi S."/>
            <person name="Itoh T."/>
            <person name="Shigeta K."/>
            <person name="Senba T."/>
            <person name="Matsumura K."/>
            <person name="Nakajima Y."/>
            <person name="Mizuno T."/>
            <person name="Morinaga M."/>
            <person name="Sasaki M."/>
            <person name="Togashi T."/>
            <person name="Oyama M."/>
            <person name="Hata H."/>
            <person name="Watanabe M."/>
            <person name="Komatsu T."/>
            <person name="Mizushima-Sugano J."/>
            <person name="Satoh T."/>
            <person name="Shirai Y."/>
            <person name="Takahashi Y."/>
            <person name="Nakagawa K."/>
            <person name="Okumura K."/>
            <person name="Nagase T."/>
            <person name="Nomura N."/>
            <person name="Kikuchi H."/>
            <person name="Masuho Y."/>
            <person name="Yamashita R."/>
            <person name="Nakai K."/>
            <person name="Yada T."/>
            <person name="Nakamura Y."/>
            <person name="Ohara O."/>
            <person name="Isogai T."/>
            <person name="Sugano S."/>
        </authorList>
    </citation>
    <scope>NUCLEOTIDE SEQUENCE [LARGE SCALE MRNA] (ISOFORM 2)</scope>
    <scope>NUCLEOTIDE SEQUENCE [LARGE SCALE MRNA] OF 318-418 (ISOFORM 1)</scope>
    <source>
        <tissue>Brain</tissue>
        <tissue>Cerebellum</tissue>
    </source>
</reference>
<reference key="3">
    <citation type="journal article" date="2004" name="Nature">
        <title>DNA sequence and analysis of human chromosome 9.</title>
        <authorList>
            <person name="Humphray S.J."/>
            <person name="Oliver K."/>
            <person name="Hunt A.R."/>
            <person name="Plumb R.W."/>
            <person name="Loveland J.E."/>
            <person name="Howe K.L."/>
            <person name="Andrews T.D."/>
            <person name="Searle S."/>
            <person name="Hunt S.E."/>
            <person name="Scott C.E."/>
            <person name="Jones M.C."/>
            <person name="Ainscough R."/>
            <person name="Almeida J.P."/>
            <person name="Ambrose K.D."/>
            <person name="Ashwell R.I.S."/>
            <person name="Babbage A.K."/>
            <person name="Babbage S."/>
            <person name="Bagguley C.L."/>
            <person name="Bailey J."/>
            <person name="Banerjee R."/>
            <person name="Barker D.J."/>
            <person name="Barlow K.F."/>
            <person name="Bates K."/>
            <person name="Beasley H."/>
            <person name="Beasley O."/>
            <person name="Bird C.P."/>
            <person name="Bray-Allen S."/>
            <person name="Brown A.J."/>
            <person name="Brown J.Y."/>
            <person name="Burford D."/>
            <person name="Burrill W."/>
            <person name="Burton J."/>
            <person name="Carder C."/>
            <person name="Carter N.P."/>
            <person name="Chapman J.C."/>
            <person name="Chen Y."/>
            <person name="Clarke G."/>
            <person name="Clark S.Y."/>
            <person name="Clee C.M."/>
            <person name="Clegg S."/>
            <person name="Collier R.E."/>
            <person name="Corby N."/>
            <person name="Crosier M."/>
            <person name="Cummings A.T."/>
            <person name="Davies J."/>
            <person name="Dhami P."/>
            <person name="Dunn M."/>
            <person name="Dutta I."/>
            <person name="Dyer L.W."/>
            <person name="Earthrowl M.E."/>
            <person name="Faulkner L."/>
            <person name="Fleming C.J."/>
            <person name="Frankish A."/>
            <person name="Frankland J.A."/>
            <person name="French L."/>
            <person name="Fricker D.G."/>
            <person name="Garner P."/>
            <person name="Garnett J."/>
            <person name="Ghori J."/>
            <person name="Gilbert J.G.R."/>
            <person name="Glison C."/>
            <person name="Grafham D.V."/>
            <person name="Gribble S."/>
            <person name="Griffiths C."/>
            <person name="Griffiths-Jones S."/>
            <person name="Grocock R."/>
            <person name="Guy J."/>
            <person name="Hall R.E."/>
            <person name="Hammond S."/>
            <person name="Harley J.L."/>
            <person name="Harrison E.S.I."/>
            <person name="Hart E.A."/>
            <person name="Heath P.D."/>
            <person name="Henderson C.D."/>
            <person name="Hopkins B.L."/>
            <person name="Howard P.J."/>
            <person name="Howden P.J."/>
            <person name="Huckle E."/>
            <person name="Johnson C."/>
            <person name="Johnson D."/>
            <person name="Joy A.A."/>
            <person name="Kay M."/>
            <person name="Keenan S."/>
            <person name="Kershaw J.K."/>
            <person name="Kimberley A.M."/>
            <person name="King A."/>
            <person name="Knights A."/>
            <person name="Laird G.K."/>
            <person name="Langford C."/>
            <person name="Lawlor S."/>
            <person name="Leongamornlert D.A."/>
            <person name="Leversha M."/>
            <person name="Lloyd C."/>
            <person name="Lloyd D.M."/>
            <person name="Lovell J."/>
            <person name="Martin S."/>
            <person name="Mashreghi-Mohammadi M."/>
            <person name="Matthews L."/>
            <person name="McLaren S."/>
            <person name="McLay K.E."/>
            <person name="McMurray A."/>
            <person name="Milne S."/>
            <person name="Nickerson T."/>
            <person name="Nisbett J."/>
            <person name="Nordsiek G."/>
            <person name="Pearce A.V."/>
            <person name="Peck A.I."/>
            <person name="Porter K.M."/>
            <person name="Pandian R."/>
            <person name="Pelan S."/>
            <person name="Phillimore B."/>
            <person name="Povey S."/>
            <person name="Ramsey Y."/>
            <person name="Rand V."/>
            <person name="Scharfe M."/>
            <person name="Sehra H.K."/>
            <person name="Shownkeen R."/>
            <person name="Sims S.K."/>
            <person name="Skuce C.D."/>
            <person name="Smith M."/>
            <person name="Steward C.A."/>
            <person name="Swarbreck D."/>
            <person name="Sycamore N."/>
            <person name="Tester J."/>
            <person name="Thorpe A."/>
            <person name="Tracey A."/>
            <person name="Tromans A."/>
            <person name="Thomas D.W."/>
            <person name="Wall M."/>
            <person name="Wallis J.M."/>
            <person name="West A.P."/>
            <person name="Whitehead S.L."/>
            <person name="Willey D.L."/>
            <person name="Williams S.A."/>
            <person name="Wilming L."/>
            <person name="Wray P.W."/>
            <person name="Young L."/>
            <person name="Ashurst J.L."/>
            <person name="Coulson A."/>
            <person name="Blocker H."/>
            <person name="Durbin R.M."/>
            <person name="Sulston J.E."/>
            <person name="Hubbard T."/>
            <person name="Jackson M.J."/>
            <person name="Bentley D.R."/>
            <person name="Beck S."/>
            <person name="Rogers J."/>
            <person name="Dunham I."/>
        </authorList>
    </citation>
    <scope>NUCLEOTIDE SEQUENCE [LARGE SCALE GENOMIC DNA]</scope>
</reference>
<reference key="4">
    <citation type="submission" date="2005-09" db="EMBL/GenBank/DDBJ databases">
        <authorList>
            <person name="Mural R.J."/>
            <person name="Istrail S."/>
            <person name="Sutton G.G."/>
            <person name="Florea L."/>
            <person name="Halpern A.L."/>
            <person name="Mobarry C.M."/>
            <person name="Lippert R."/>
            <person name="Walenz B."/>
            <person name="Shatkay H."/>
            <person name="Dew I."/>
            <person name="Miller J.R."/>
            <person name="Flanigan M.J."/>
            <person name="Edwards N.J."/>
            <person name="Bolanos R."/>
            <person name="Fasulo D."/>
            <person name="Halldorsson B.V."/>
            <person name="Hannenhalli S."/>
            <person name="Turner R."/>
            <person name="Yooseph S."/>
            <person name="Lu F."/>
            <person name="Nusskern D.R."/>
            <person name="Shue B.C."/>
            <person name="Zheng X.H."/>
            <person name="Zhong F."/>
            <person name="Delcher A.L."/>
            <person name="Huson D.H."/>
            <person name="Kravitz S.A."/>
            <person name="Mouchard L."/>
            <person name="Reinert K."/>
            <person name="Remington K.A."/>
            <person name="Clark A.G."/>
            <person name="Waterman M.S."/>
            <person name="Eichler E.E."/>
            <person name="Adams M.D."/>
            <person name="Hunkapiller M.W."/>
            <person name="Myers E.W."/>
            <person name="Venter J.C."/>
        </authorList>
    </citation>
    <scope>NUCLEOTIDE SEQUENCE [LARGE SCALE GENOMIC DNA]</scope>
</reference>
<reference key="5">
    <citation type="journal article" date="2004" name="Genome Res.">
        <title>The status, quality, and expansion of the NIH full-length cDNA project: the Mammalian Gene Collection (MGC).</title>
        <authorList>
            <consortium name="The MGC Project Team"/>
        </authorList>
    </citation>
    <scope>NUCLEOTIDE SEQUENCE [LARGE SCALE MRNA] (ISOFORM 1)</scope>
    <source>
        <tissue>Testis</tissue>
    </source>
</reference>
<reference key="6">
    <citation type="journal article" date="2013" name="Acta Neuropathol.">
        <title>Bidirectional transcripts of the expanded C9orf72 hexanucleotide repeat are translated into aggregating dipeptide repeat proteins.</title>
        <authorList>
            <person name="Mori K."/>
            <person name="Arzberger T."/>
            <person name="Graesser F.A."/>
            <person name="Gijselinck I."/>
            <person name="May S."/>
            <person name="Rentzsch K."/>
            <person name="Weng S.M."/>
            <person name="Schludi M.H."/>
            <person name="van der Zee J."/>
            <person name="Cruts M."/>
            <person name="Van Broeckhoven C."/>
            <person name="Kremmer E."/>
            <person name="Kretzschmar H.A."/>
            <person name="Haass C."/>
            <person name="Edbauer D."/>
        </authorList>
    </citation>
    <scope>PATHOLOGICAL MECHANISM</scope>
</reference>
<reference key="7">
    <citation type="journal article" date="2014" name="Hum. Mol. Genet.">
        <title>C9ORF72, implicated in amytrophic lateral sclerosis and frontotemporal dementia, regulates endosomal trafficking.</title>
        <authorList>
            <person name="Farg M.A."/>
            <person name="Sundaramoorthy V."/>
            <person name="Sultana J.M."/>
            <person name="Yang S."/>
            <person name="Atkinson R.A."/>
            <person name="Levina V."/>
            <person name="Halloran M.A."/>
            <person name="Gleeson P.A."/>
            <person name="Blair I.P."/>
            <person name="Soo K.Y."/>
            <person name="King A.E."/>
            <person name="Atkin J.D."/>
        </authorList>
    </citation>
    <scope>FUNCTION IN ENDOSOMAL TRAFFICKING</scope>
    <scope>INTERACTION WITH RAB GTPASES; HNRNPA1; HNRNPA2B1 AND UBQLN2</scope>
    <scope>SUBCELLULAR LOCATION</scope>
</reference>
<reference key="8">
    <citation type="journal article" date="2017" name="Hum. Mol. Genet.">
        <authorList>
            <person name="Farg M.A."/>
            <person name="Sundaramoorthy V."/>
            <person name="Sultana J.M."/>
            <person name="Yang S."/>
            <person name="Atkinson R.A.K."/>
            <person name="Levina V."/>
            <person name="Halloran M.A."/>
            <person name="Gleeson P.A."/>
            <person name="Blair I.P."/>
            <person name="Soo K.Y."/>
            <person name="King A.E."/>
            <person name="Atkin J.D."/>
        </authorList>
    </citation>
    <scope>ERRATUM OF PUBMED:24549040</scope>
</reference>
<reference key="9">
    <citation type="journal article" date="2014" name="Nature">
        <title>C9orf72 nucleotide repeat structures initiate molecular cascades of disease.</title>
        <authorList>
            <person name="Haeusler A.R."/>
            <person name="Donnelly C.J."/>
            <person name="Periz G."/>
            <person name="Simko E.A."/>
            <person name="Shaw P.G."/>
            <person name="Kim M.S."/>
            <person name="Maragakis N.J."/>
            <person name="Troncoso J.C."/>
            <person name="Pandey A."/>
            <person name="Sattler R."/>
            <person name="Rothstein J.D."/>
            <person name="Wang J."/>
        </authorList>
    </citation>
    <scope>PATHOLOGICAL MECHANISM</scope>
</reference>
<reference key="10">
    <citation type="journal article" date="2013" name="Bioinformatics">
        <title>The product of C9orf72, a gene strongly implicated in neurodegeneration, is structurally related to DENN Rab-GEFs.</title>
        <authorList>
            <person name="Levine T.P."/>
            <person name="Daniels R.D."/>
            <person name="Gatta A.T."/>
            <person name="Wong L.H."/>
            <person name="Hayes M.J."/>
        </authorList>
    </citation>
    <scope>DOMAIN ARCHITECTURE</scope>
</reference>
<reference key="11">
    <citation type="journal article" date="2015" name="Ann. Neurol.">
        <title>Isoform-specific antibodies reveal distinct subcellular localizations of C9orf72 in amyotrophic lateral sclerosis.</title>
        <authorList>
            <person name="Xiao S."/>
            <person name="MacNair L."/>
            <person name="McGoldrick P."/>
            <person name="McKeever P.M."/>
            <person name="McLean J.R."/>
            <person name="Zhang M."/>
            <person name="Keith J."/>
            <person name="Zinman L."/>
            <person name="Rogaeva E."/>
            <person name="Robertson J."/>
        </authorList>
    </citation>
    <scope>SUBCELLULAR LOCATION (ISOFORMS 1 AND 2)</scope>
</reference>
<reference key="12">
    <citation type="journal article" date="2016" name="Acta Neuropathol. Commun.">
        <title>The ALS/FTLD associated protein C9orf72 associates with SMCR8 and WDR41 to regulate the autophagy-lysosome pathway.</title>
        <authorList>
            <person name="Sullivan P.M."/>
            <person name="Zhou X."/>
            <person name="Robins A.M."/>
            <person name="Paushter D.H."/>
            <person name="Kim D."/>
            <person name="Smolka M.B."/>
            <person name="Hu F."/>
        </authorList>
    </citation>
    <scope>FUNCTION</scope>
    <scope>IDENTIFICATION IN THE C9ORF72-SMCR8 COMPLEX</scope>
    <scope>SUBCELLULAR LOCATION</scope>
</reference>
<reference key="13">
    <citation type="journal article" date="2016" name="EMBO J.">
        <title>Loss of C9ORF72 impairs autophagy and synergizes with polyQ Ataxin-2 to induce motor neuron dysfunction and cell death.</title>
        <authorList>
            <person name="Sellier C."/>
            <person name="Campanari M.L."/>
            <person name="Julie Corbier C."/>
            <person name="Gaucherot A."/>
            <person name="Kolb-Cheynel I."/>
            <person name="Oulad-Abdelghani M."/>
            <person name="Ruffenach F."/>
            <person name="Page A."/>
            <person name="Ciura S."/>
            <person name="Kabashi E."/>
            <person name="Charlet-Berguerand N."/>
        </authorList>
    </citation>
    <scope>FUNCTION</scope>
    <scope>IDENTIFICATION IN THE C9ORF72-SMCR8 COMPLEX</scope>
</reference>
<reference key="14">
    <citation type="journal article" date="2016" name="EMBO J.">
        <title>The C9orf72 protein interacts with Rab1a and the ULK1 complex to regulate initiation of autophagy.</title>
        <authorList>
            <person name="Webster C.P."/>
            <person name="Smith E.F."/>
            <person name="Bauer C.S."/>
            <person name="Moller A."/>
            <person name="Hautbergue G.M."/>
            <person name="Ferraiuolo L."/>
            <person name="Myszczynska M.A."/>
            <person name="Higginbottom A."/>
            <person name="Walsh M.J."/>
            <person name="Whitworth A.J."/>
            <person name="Kaspar B.K."/>
            <person name="Meyer K."/>
            <person name="Shaw P.J."/>
            <person name="Grierson A.J."/>
            <person name="De Vos K.J."/>
        </authorList>
    </citation>
    <scope>FUNCTION</scope>
    <scope>INTERACTION WITH ATG13; RAB1A; RB1CC1 AND ULK1</scope>
</reference>
<reference key="15">
    <citation type="journal article" date="2016" name="Mol. Biol. Cell">
        <title>C9orf72 binds SMCR8, localizes to lysosomes, and regulates mTORC1 signaling.</title>
        <authorList>
            <person name="Amick J."/>
            <person name="Roczniak-Ferguson A."/>
            <person name="Ferguson S.M."/>
        </authorList>
    </citation>
    <scope>FUNCTION</scope>
    <scope>SUBCELLULAR LOCATION</scope>
    <scope>IDENTIFICATION IN THE C9ORF72-SMCR8 COMPLEX</scope>
    <scope>INTERACTION WITH SMCR8</scope>
</reference>
<reference key="16">
    <citation type="journal article" date="2016" name="Nat. Neurosci.">
        <title>C9ORF72 interaction with cofilin modulates actin dynamics in motor neurons.</title>
        <authorList>
            <person name="Sivadasan R."/>
            <person name="Hornburg D."/>
            <person name="Drepper C."/>
            <person name="Frank N."/>
            <person name="Jablonka S."/>
            <person name="Hansel A."/>
            <person name="Lojewski X."/>
            <person name="Sterneckert J."/>
            <person name="Hermann A."/>
            <person name="Shaw P.J."/>
            <person name="Ince P.G."/>
            <person name="Mann M."/>
            <person name="Meissner F."/>
            <person name="Sendtner M."/>
        </authorList>
    </citation>
    <scope>FUNCTION</scope>
    <scope>INTERACTION WITH COFILIN</scope>
    <scope>SUBCELLULAR LOCATION</scope>
</reference>
<reference key="17">
    <citation type="journal article" date="2016" name="Sci. Adv.">
        <title>A C9ORF72/SMCR8-containing complex regulates ULK1 and plays a dual role in autophagy.</title>
        <authorList>
            <person name="Yang M."/>
            <person name="Liang C."/>
            <person name="Swaminathan K."/>
            <person name="Herrlinger S."/>
            <person name="Lai F."/>
            <person name="Shiekhattar R."/>
            <person name="Chen J.F."/>
        </authorList>
    </citation>
    <scope>FUNCTION</scope>
    <scope>IDENTIFICATION IN THE C9ORF72-SMCR8 COMPLEX</scope>
    <scope>INTERACTION WITH SMCR8</scope>
</reference>
<reference key="18">
    <citation type="journal article" date="2017" name="Elife">
        <title>Multiplex image-based autophagy RNAi screening identifies SMCR8 as ULK1 kinase activity and gene expression regulator.</title>
        <authorList>
            <person name="Jung J."/>
            <person name="Nayak A."/>
            <person name="Schaeffer V."/>
            <person name="Starzetz T."/>
            <person name="Kirsch A.K."/>
            <person name="Mueller S."/>
            <person name="Dikic I."/>
            <person name="Mittelbronn M."/>
            <person name="Behrends C."/>
        </authorList>
    </citation>
    <scope>FUNCTION</scope>
    <scope>IDENTIFICATION IN THE C9ORF72-SMCR8 COMPLEX</scope>
</reference>
<reference key="19">
    <citation type="journal article" date="2017" name="Mol. Neurobiol.">
        <title>C9ORF72 regulates stress granule formation and its deficiency impairs stress granule assembly, hypersensitizing cells to stress.</title>
        <authorList>
            <person name="Maharjan N."/>
            <person name="Kuenzli C."/>
            <person name="Buthey K."/>
            <person name="Saxena S."/>
        </authorList>
    </citation>
    <scope>FUNCTION (ISOFORMS 1 AND 2)</scope>
    <scope>SUBCELLULAR LOCATION</scope>
</reference>
<reference evidence="26" key="20">
    <citation type="journal article" date="2020" name="Proc. Natl. Acad. Sci. U.S.A.">
        <title>Cryo-EM structure of C9ORF72-SMCR8-WDR41 reveals the role as a GAP for Rab8a and Rab11a.</title>
        <authorList>
            <person name="Tang D."/>
            <person name="Sheng J."/>
            <person name="Xu L."/>
            <person name="Zhan X."/>
            <person name="Liu J."/>
            <person name="Jiang H."/>
            <person name="Shu X."/>
            <person name="Liu X."/>
            <person name="Zhang T."/>
            <person name="Jiang L."/>
            <person name="Zhou C."/>
            <person name="Li W."/>
            <person name="Cheng W."/>
            <person name="Li Z."/>
            <person name="Wang K."/>
            <person name="Lu K."/>
            <person name="Yan C."/>
            <person name="Qi S."/>
        </authorList>
    </citation>
    <scope>STRUCTURE BY ELECTRON MICROSCOPY (3.20 ANGSTROMS) IN THE C9ORF72-SMCR8 COMPLEX</scope>
    <scope>FUNCTION</scope>
    <scope>INTERACTION WITH SMCR8</scope>
</reference>
<reference key="21">
    <citation type="journal article" date="2011" name="Neuron">
        <title>A hexanucleotide repeat expansion in C9orf72 is the cause of chromosome 9p21-linked ALS-FTD.</title>
        <authorList>
            <person name="Renton A.E."/>
            <person name="Majounie E."/>
            <person name="Waite A."/>
            <person name="Simon-Sanchez J."/>
            <person name="Rollinson S."/>
            <person name="Gibbs J.R."/>
            <person name="Schymick J.C."/>
            <person name="Laaksovirta H."/>
            <person name="van Swieten J.C."/>
            <person name="Myllykangas L."/>
            <person name="Kalimo H."/>
            <person name="Paetau A."/>
            <person name="Abramzon Y."/>
            <person name="Remes A.M."/>
            <person name="Kaganovich A."/>
            <person name="Scholz S.W."/>
            <person name="Duckworth J."/>
            <person name="Ding J."/>
            <person name="Harmer D.W."/>
            <person name="Hernandez D.G."/>
            <person name="Johnson J.O."/>
            <person name="Mok K."/>
            <person name="Ryten M."/>
            <person name="Trabzuni D."/>
            <person name="Guerreiro R.J."/>
            <person name="Orrell R.W."/>
            <person name="Neal J."/>
            <person name="Murray A."/>
            <person name="Pearson J."/>
            <person name="Jansen I.E."/>
            <person name="Sondervan D."/>
            <person name="Seelaar H."/>
            <person name="Blake D."/>
            <person name="Young K."/>
            <person name="Halliwell N."/>
            <person name="Callister J.B."/>
            <person name="Toulson G."/>
            <person name="Richardson A."/>
            <person name="Gerhard A."/>
            <person name="Snowden J."/>
            <person name="Mann D."/>
            <person name="Neary D."/>
            <person name="Nalls M.A."/>
            <person name="Peuralinna T."/>
            <person name="Jansson L."/>
            <person name="Isoviita V.M."/>
            <person name="Kaivorinne A.L."/>
            <person name="Holtta-Vuori M."/>
            <person name="Ikonen E."/>
            <person name="Sulkava R."/>
            <person name="Benatar M."/>
            <person name="Wuu J."/>
            <person name="Chio A."/>
            <person name="Restagno G."/>
            <person name="Borghero G."/>
            <person name="Sabatelli M."/>
            <person name="Heckerman D."/>
            <person name="Rogaeva E."/>
            <person name="Zinman L."/>
            <person name="Rothstein J.D."/>
            <person name="Sendtner M."/>
            <person name="Drepper C."/>
            <person name="Eichler E.E."/>
            <person name="Alkan C."/>
            <person name="Abdullaev Z."/>
            <person name="Pack S.D."/>
            <person name="Dutra A."/>
            <person name="Pak E."/>
            <person name="Hardy J."/>
            <person name="Singleton A."/>
            <person name="Williams N.M."/>
            <person name="Heutink P."/>
            <person name="Pickering-Brown S."/>
            <person name="Morris H.R."/>
            <person name="Tienari P.J."/>
            <person name="Traynor B.J."/>
        </authorList>
    </citation>
    <scope>INVOLVEMENT IN FTDALS1</scope>
    <scope>SUBCELLULAR LOCATION</scope>
    <scope>TISSUE SPECIFICITY</scope>
</reference>
<reference key="22">
    <citation type="journal article" date="2013" name="Hum. Mutat.">
        <title>Analysis of the C9orf72 gene in patients with amyotrophic lateral sclerosis in Spain and different populations worldwide.</title>
        <authorList>
            <person name="Garcia-Redondo A."/>
            <person name="Dols-Icardo O."/>
            <person name="Rojas-Garcia R."/>
            <person name="Esteban-Perez J."/>
            <person name="Cordero-Vazquez P."/>
            <person name="Munoz-Blanco J.L."/>
            <person name="Catalina I."/>
            <person name="Gonzalez-Munoz M."/>
            <person name="Varona L."/>
            <person name="Sarasola E."/>
            <person name="Povedano M."/>
            <person name="Sevilla T."/>
            <person name="Guerrero A."/>
            <person name="Pardo J."/>
            <person name="de Munain A.L."/>
            <person name="Marquez-Infante C."/>
            <person name="de Rivera F.J."/>
            <person name="Pastor P."/>
            <person name="Jerico I."/>
            <person name="de Arcaya A.A."/>
            <person name="Mora J.S."/>
            <person name="Clarimon J."/>
            <person name="Gonzalo-Martinez J.F."/>
            <person name="Juarez-Rufian A."/>
            <person name="Atencia G."/>
            <person name="Jimenez-Bautista R."/>
            <person name="Moran Y."/>
            <person name="Mascias J."/>
            <person name="Hernandez-Barral M."/>
            <person name="Kapetanovic S."/>
            <person name="Garcia-Barcina M."/>
            <person name="Alcala C."/>
            <person name="Vela A."/>
            <person name="Ramirez-Ramos C."/>
            <person name="Galan L."/>
            <person name="Perez-Tur J."/>
            <person name="Quintans B."/>
            <person name="Sobrido M.J."/>
            <person name="Fernandez-Torron R."/>
            <person name="Poza J.J."/>
            <person name="Gorostidi A."/>
            <person name="Paradas C."/>
            <person name="Villoslada P."/>
            <person name="Larrode P."/>
            <person name="Capablo J.L."/>
            <person name="Pascual-Calvet J."/>
            <person name="Goni M."/>
            <person name="Morgado Y."/>
            <person name="Guitart M."/>
            <person name="Moreno-Laguna S."/>
            <person name="Rueda A."/>
            <person name="Martin-Estefania C."/>
            <person name="Cemillan C."/>
            <person name="Blesa R."/>
            <person name="Lleo A."/>
        </authorList>
    </citation>
    <scope>INVOLVEMENT IN FTDALS1</scope>
</reference>
<reference key="23">
    <citation type="journal article" date="2018" name="Genes Dev.">
        <title>A C9orf72-CARM1 axis regulates lipid metabolism under glucose starvation-induced nutrient stress.</title>
        <authorList>
            <person name="Liu Y."/>
            <person name="Wang T."/>
            <person name="Ji Y.J."/>
            <person name="Johnson K."/>
            <person name="Liu H."/>
            <person name="Johnson K."/>
            <person name="Bailey S."/>
            <person name="Suk Y."/>
            <person name="Lu Y.N."/>
            <person name="Liu M."/>
            <person name="Wang J."/>
        </authorList>
    </citation>
    <scope>INVOLVEMENT IN FTDALS1</scope>
</reference>
<reference key="24">
    <citation type="journal article" date="2023" name="Nat. Commun.">
        <title>C9orf72-catalyzed GTP loading of Rab39A enables HOPS-mediated membrane tethering and fusion in mammalian autophagy.</title>
        <authorList>
            <person name="Zhang S."/>
            <person name="Tong M."/>
            <person name="Zheng D."/>
            <person name="Huang H."/>
            <person name="Li L."/>
            <person name="Ungermann C."/>
            <person name="Pan Y."/>
            <person name="Luo H."/>
            <person name="Lei M."/>
            <person name="Tang Z."/>
            <person name="Fu W."/>
            <person name="Chen S."/>
            <person name="Liu X."/>
            <person name="Zhong Q."/>
        </authorList>
    </citation>
    <scope>FUNCTION</scope>
    <scope>INTERACTION WITH RAB39A AND RAB39B</scope>
    <scope>SUBCELLULAR LOCATION</scope>
</reference>
<proteinExistence type="evidence at protein level"/>
<comment type="function">
    <text evidence="1 7 11 12 13 14 15 16 17 19 20">Acts as a guanine-nucleotide releasing factor (GEF) for Rab GTPases by promoting the conversion of inactive RAB-GDP to the active form RAB-GTP (PubMed:27103069, PubMed:27193190, PubMed:27617292, PubMed:28195531, PubMed:37821429). Acts as a GEF for RAB39A which enables HOPS-mediated autophagosome-lysosome membrane tethering and fusion in mammalian autophagy (PubMed:37821429). Component of the C9orf72-SMCR8 complex where both subunits display GEF activity and that regulates autophagy (PubMed:27103069, PubMed:27193190, PubMed:27617292, PubMed:28195531). As part of the C9orf72-SMCR8-WDR41 (CSW) complex, functions as GEF for RAB8A and RAB39B, thereby promoting autophagosome maturation (PubMed:27103069). As part of the C9orf72-SMCR8 complex, also functions as GTPase activating protein (GAP) for RAB8A and RAB11A in vitro (PubMed:32303654). The C9orf72-SMCR8 complex also acts as a regulator of autophagy initiation by interacting with the ULK1/ATG1 kinase complex and modulating its protein kinase activity (PubMed:27617292). Promotes initiation of autophagy by regulating the RAB1A-dependent trafficking of the ULK1/ATG1 kinase complex to the phagophore which leads to autophagosome formation (PubMed:27334615). Acts as a regulator of mTORC1 signaling by promoting phosphorylation of mTORC1 substrates (PubMed:27559131). Plays a role in endosomal trafficking (PubMed:24549040). May be involved in regulating the maturation of phagosomes to lysosomes (By similarity). Promotes the lysosomal localization and lysosome-mediated degradation of CARM1 which leads to inhibition of starvation-induced lipid metabolism (By similarity). Regulates actin dynamics in motor neurons by inhibiting the GTP-binding activity of ARF6, leading to ARF6 inactivation (PubMed:27723745). This reduces the activity of the LIMK1 and LIMK2 kinases which are responsible for phosphorylation and inactivation of cofilin, leading to CFL1/cofilin activation (PubMed:27723745). Positively regulates axon extension and axon growth cone size in spinal motor neurons (PubMed:27723745). Required for SMCR8 protein expression and localization at pre- and post-synaptic compartments in the forebrain, also regulates protein abundance of RAB3A and GRIA1/GLUR1 in post-synaptic compartments in the forebrain and hippocampus (By similarity). Plays a role within the hematopoietic system in restricting inflammation and the development of autoimmunity (By similarity).</text>
</comment>
<comment type="function">
    <molecule>Isoform 1</molecule>
    <text evidence="10">Regulates stress granule assembly in response to cellular stress.</text>
</comment>
<comment type="function">
    <molecule>Isoform 2</molecule>
    <text evidence="10">Does not play a role in regulation of stress granule assembly in response to cellular stress.</text>
</comment>
<comment type="subunit">
    <text evidence="1 7 11 12 13 14 15 16 17 19 20">Component of the C9orf72-SMCR8 complex, at least composed of C9orf72, SMCR8 and WDR41 (PubMed:27103069, PubMed:27193190, PubMed:27559131, PubMed:27617292, PubMed:28195531, PubMed:32303654). The complex is formed of two protomers, each individually consisting of one molecule each of C9orf72, SMCR8 and WDR41 (PubMed:32303654). The protomers homodimerize via an interaction between C9orf72 (via C-terminus) and SMCR8 (via N-terminus) (PubMed:32303654). Within each protomer SMCR8 (via DENN domain) acts as a bridging protein between WDR41 (via C-terminus and N-terminus) and C9orf72 (via C-terminus) (PubMed:32303654). The C9orf72-SMCR8 complex associates with the ULK1/ATG1 kinase complex (PubMed:27617292, PubMed:28195531). Interacts with ULK1/ATG1 kinase complex members ULK1, ATG13 and RB1CC1 (PubMed:27334615). Interacts with SMCR8; the interaction is direct (PubMed:27559131, PubMed:27617292, PubMed:32303654). Interacts with HNRNPA1, HNRNPA2B1 and UBQLN2 (PubMed:24549040). Interacts with small Rab GTPase RAB1A; the interaction mediates recruitment of RAB1A to the ULK1/ATG1 kinase complex (PubMed:27334615). Also interacts with small Rab GTPase RAB7A (By similarity). Interacts with cofilin (PubMed:27723745). Interacts with GTP-binding proteins ARF1 and ARF6 (By similarity). Interacts with the DLG4/PSD-95 (By similarity). Interacts with CARM1 (via PH domain-like fold) (By similarity). Interacts with RAB39A and RAB39B (in GDP-bound forms); functions as GEF for RAB39A and RAB39B (PubMed:37821429).</text>
</comment>
<comment type="interaction">
    <interactant intactId="EBI-2961725">
        <id>Q96LT7</id>
    </interactant>
    <interactant intactId="EBI-945751">
        <id>P38432</id>
        <label>COIL</label>
    </interactant>
    <organismsDiffer>false</organismsDiffer>
    <experiments>3</experiments>
</comment>
<comment type="interaction">
    <interactant intactId="EBI-2961725">
        <id>Q96LT7</id>
    </interactant>
    <interactant intactId="EBI-748171">
        <id>O43186</id>
        <label>CRX</label>
    </interactant>
    <organismsDiffer>false</organismsDiffer>
    <experiments>3</experiments>
</comment>
<comment type="interaction">
    <interactant intactId="EBI-2961725">
        <id>Q96LT7</id>
    </interactant>
    <interactant intactId="EBI-718773">
        <id>P49770</id>
        <label>EIF2B2</label>
    </interactant>
    <organismsDiffer>false</organismsDiffer>
    <experiments>6</experiments>
</comment>
<comment type="interaction">
    <interactant intactId="EBI-2961725">
        <id>Q96LT7</id>
    </interactant>
    <interactant intactId="EBI-10288660">
        <id>Q53XC2</id>
        <label>EIF2B2</label>
    </interactant>
    <organismsDiffer>false</organismsDiffer>
    <experiments>3</experiments>
</comment>
<comment type="interaction">
    <interactant intactId="EBI-2961725">
        <id>Q96LT7</id>
    </interactant>
    <interactant intactId="EBI-10288788">
        <id>Q9BPX4</id>
        <label>EIF2B2</label>
    </interactant>
    <organismsDiffer>false</organismsDiffer>
    <experiments>3</experiments>
</comment>
<comment type="interaction">
    <interactant intactId="EBI-2961725">
        <id>Q96LT7</id>
    </interactant>
    <interactant intactId="EBI-740641">
        <id>Q9NP66</id>
        <label>HMG20A</label>
    </interactant>
    <organismsDiffer>false</organismsDiffer>
    <experiments>3</experiments>
</comment>
<comment type="interaction">
    <interactant intactId="EBI-2961725">
        <id>Q96LT7</id>
    </interactant>
    <interactant intactId="EBI-372942">
        <id>Q13287</id>
        <label>NMI</label>
    </interactant>
    <organismsDiffer>false</organismsDiffer>
    <experiments>6</experiments>
</comment>
<comment type="interaction">
    <interactant intactId="EBI-2961725">
        <id>Q96LT7</id>
    </interactant>
    <interactant intactId="EBI-366574">
        <id>O75817</id>
        <label>POP7</label>
    </interactant>
    <organismsDiffer>false</organismsDiffer>
    <experiments>3</experiments>
</comment>
<comment type="interaction">
    <interactant intactId="EBI-2961725">
        <id>Q96LT7</id>
    </interactant>
    <interactant intactId="EBI-307352">
        <id>Q04864</id>
        <label>REL</label>
    </interactant>
    <organismsDiffer>false</organismsDiffer>
    <experiments>3</experiments>
</comment>
<comment type="interaction">
    <interactant intactId="EBI-2961725">
        <id>Q96LT7</id>
    </interactant>
    <interactant intactId="EBI-2961718">
        <id>Q8TEV9</id>
        <label>SMCR8</label>
    </interactant>
    <organismsDiffer>false</organismsDiffer>
    <experiments>11</experiments>
</comment>
<comment type="interaction">
    <interactant intactId="EBI-2961725">
        <id>Q96LT7</id>
    </interactant>
    <interactant intactId="EBI-12820047">
        <id>Q17R54</id>
        <label>SYN3</label>
    </interactant>
    <organismsDiffer>false</organismsDiffer>
    <experiments>5</experiments>
</comment>
<comment type="interaction">
    <interactant intactId="EBI-2961725">
        <id>Q96LT7</id>
    </interactant>
    <interactant intactId="EBI-10259086">
        <id>Q86UV6-2</id>
        <label>TRIM74</label>
    </interactant>
    <organismsDiffer>false</organismsDiffer>
    <experiments>3</experiments>
</comment>
<comment type="interaction">
    <interactant intactId="EBI-2961725">
        <id>Q96LT7</id>
    </interactant>
    <interactant intactId="EBI-12894399">
        <id>Q9H8Y1</id>
        <label>VRTN</label>
    </interactant>
    <organismsDiffer>false</organismsDiffer>
    <experiments>6</experiments>
</comment>
<comment type="interaction">
    <interactant intactId="EBI-16693635">
        <id>Q96LT7-1</id>
    </interactant>
    <interactant intactId="EBI-2798775">
        <id>O75143</id>
        <label>ATG13</label>
    </interactant>
    <organismsDiffer>false</organismsDiffer>
    <experiments>5</experiments>
</comment>
<comment type="interaction">
    <interactant intactId="EBI-16693635">
        <id>Q96LT7-1</id>
    </interactant>
    <interactant intactId="EBI-716845">
        <id>P62820</id>
        <label>RAB1A</label>
    </interactant>
    <organismsDiffer>false</organismsDiffer>
    <experiments>5</experiments>
</comment>
<comment type="interaction">
    <interactant intactId="EBI-16693635">
        <id>Q96LT7-1</id>
    </interactant>
    <interactant intactId="EBI-1047793">
        <id>Q8TDY2</id>
        <label>RB1CC1</label>
    </interactant>
    <organismsDiffer>false</organismsDiffer>
    <experiments>7</experiments>
</comment>
<comment type="interaction">
    <interactant intactId="EBI-16693635">
        <id>Q96LT7-1</id>
    </interactant>
    <interactant intactId="EBI-2961718">
        <id>Q8TEV9</id>
        <label>SMCR8</label>
    </interactant>
    <organismsDiffer>false</organismsDiffer>
    <experiments>5</experiments>
</comment>
<comment type="interaction">
    <interactant intactId="EBI-16693635">
        <id>Q96LT7-1</id>
    </interactant>
    <interactant intactId="EBI-908831">
        <id>O75385</id>
        <label>ULK1</label>
    </interactant>
    <organismsDiffer>false</organismsDiffer>
    <experiments>5</experiments>
</comment>
<comment type="interaction">
    <interactant intactId="EBI-16693673">
        <id>Q96LT7-2</id>
    </interactant>
    <interactant intactId="EBI-2798775">
        <id>O75143</id>
        <label>ATG13</label>
    </interactant>
    <organismsDiffer>false</organismsDiffer>
    <experiments>4</experiments>
</comment>
<comment type="interaction">
    <interactant intactId="EBI-16693673">
        <id>Q96LT7-2</id>
    </interactant>
    <interactant intactId="EBI-716845">
        <id>P62820</id>
        <label>RAB1A</label>
    </interactant>
    <organismsDiffer>false</organismsDiffer>
    <experiments>4</experiments>
</comment>
<comment type="interaction">
    <interactant intactId="EBI-16693673">
        <id>Q96LT7-2</id>
    </interactant>
    <interactant intactId="EBI-1047793">
        <id>Q8TDY2</id>
        <label>RB1CC1</label>
    </interactant>
    <organismsDiffer>false</organismsDiffer>
    <experiments>6</experiments>
</comment>
<comment type="interaction">
    <interactant intactId="EBI-16693673">
        <id>Q96LT7-2</id>
    </interactant>
    <interactant intactId="EBI-908831">
        <id>O75385</id>
        <label>ULK1</label>
    </interactant>
    <organismsDiffer>false</organismsDiffer>
    <experiments>4</experiments>
</comment>
<comment type="subcellular location">
    <subcellularLocation>
        <location evidence="3 10 12 20">Cytoplasm</location>
    </subcellularLocation>
    <subcellularLocation>
        <location evidence="4 10">Nucleus</location>
    </subcellularLocation>
    <subcellularLocation>
        <location evidence="10">Cytoplasm</location>
        <location evidence="10">P-body</location>
    </subcellularLocation>
    <subcellularLocation>
        <location evidence="10">Cytoplasm</location>
        <location evidence="10">Stress granule</location>
    </subcellularLocation>
    <subcellularLocation>
        <location evidence="7">Endosome</location>
    </subcellularLocation>
    <subcellularLocation>
        <location evidence="7 14">Lysosome</location>
    </subcellularLocation>
    <subcellularLocation>
        <location evidence="7">Cytoplasmic vesicle</location>
        <location evidence="7">Autophagosome</location>
    </subcellularLocation>
    <subcellularLocation>
        <location evidence="20">Autolysosome</location>
    </subcellularLocation>
    <subcellularLocation>
        <location evidence="7">Secreted</location>
    </subcellularLocation>
    <subcellularLocation>
        <location evidence="16">Cell projection</location>
        <location evidence="16">Axon</location>
    </subcellularLocation>
    <subcellularLocation>
        <location evidence="16">Cell projection</location>
        <location evidence="16">Growth cone</location>
    </subcellularLocation>
    <subcellularLocation>
        <location evidence="1">Perikaryon</location>
    </subcellularLocation>
    <text evidence="1 3 4 10 20">Detected in the cytoplasm of neurons from brain tissue (PubMed:21944778). Detected in the nucleus in fibroblasts (PubMed:21944779). During corticogenesis, transitions from being predominantly cytoplasmic to a more even nucleocytoplasmic distribution (By similarity). Majorly localized in cytosol under basal conditions (PubMed:37821429). Majorly gathered on autolysosomes structures under autophagy-induced conditions (PubMed:37821429).</text>
</comment>
<comment type="subcellular location">
    <molecule>Isoform 1</molecule>
    <subcellularLocation>
        <location evidence="9">Perikaryon</location>
    </subcellularLocation>
    <subcellularLocation>
        <location evidence="9">Cell projection</location>
        <location evidence="9">Dendrite</location>
    </subcellularLocation>
    <subcellularLocation>
        <location evidence="1">Presynapse</location>
    </subcellularLocation>
    <subcellularLocation>
        <location evidence="1">Postsynapse</location>
    </subcellularLocation>
    <text evidence="9">Expressed diffusely throughout the cytoplasm and dendritic processes of cerebellar Purkinje cells. Also expressed diffusely throughout the cytoplasm of spinal motor neurons.</text>
</comment>
<comment type="subcellular location">
    <molecule>Isoform 2</molecule>
    <subcellularLocation>
        <location evidence="9">Nucleus membrane</location>
        <topology evidence="24">Peripheral membrane protein</topology>
    </subcellularLocation>
    <subcellularLocation>
        <location evidence="9">Nucleus</location>
    </subcellularLocation>
    <text evidence="9">Detected at the nuclear membrane of cerebellar Purkinje cells and spinal motor neurons. Also shows diffuse nuclear expression in spinal motor neurons.</text>
</comment>
<comment type="alternative products">
    <event type="alternative splicing"/>
    <isoform>
        <id>Q96LT7-1</id>
        <name>1</name>
        <name evidence="22">C9-L</name>
        <name evidence="23">C9(LF)</name>
        <sequence type="displayed"/>
    </isoform>
    <isoform>
        <id>Q96LT7-2</id>
        <name>2</name>
        <name evidence="22">C9-S</name>
        <name evidence="23">C9(SF)</name>
        <sequence type="described" ref="VSP_014745 VSP_014746"/>
    </isoform>
</comment>
<comment type="tissue specificity">
    <text evidence="3 4">Both isoforms are widely expressed, including kidney, lung, liver, heart, testis and several brain regions, such as cerebellum. Also expressed in the frontal cortex and in lymphoblasts (at protein level).</text>
</comment>
<comment type="disease" evidence="3 4 5 18">
    <disease id="DI-03247">
        <name>Frontotemporal dementia and/or amyotrophic lateral sclerosis 1</name>
        <acronym>FTDALS1</acronym>
        <description>An autosomal dominant neurodegenerative disorder characterized by adult onset of frontotemporal dementia and/or amyotrophic lateral sclerosis in an affected individual. There is high intrafamilial variation. Frontotemporal dementia is characterized by frontal and temporal lobe atrophy associated with neuronal loss, gliosis, and dementia. Patients exhibit progressive changes in social, behavioral, and/or language function. Amyotrophic lateral sclerosis is characterized by the death of motor neurons in the brain, brainstem, and spinal cord, resulting in fatal paralysis.</description>
        <dbReference type="MIM" id="105550"/>
    </disease>
    <text evidence="6 8">The disease is caused by variants affecting the gene represented in this entry. In the first intron of the gene, the expansion of a GGGGCC hexanucleotide that can vary from 10 to thousands of repeats, represents the most common genetic cause of both familial and sporadic FTDALS. The hexanucleotide repeat expansion (HRE) is structurally polymorphic and during transcription, is responsible for the formation of RNA and DNA G-quadruplexes resulting in the production of aborted transcripts at the expense of functional transcripts. The accumulation of those aborted transcripts may cause nucleolar stress and indirectly cell death (PubMed:24598541). The expanded GGGGCC repeats are bidirectionally transcribed into repetitive RNA, which forms sense and antisense RNA foci. Remarkably, despite being within a non-coding region, these repetitive RNAs can be translated in every reading frame to form five different dipeptide repeat proteins (DPRs) -- poly-GA, poly-GP, poly-GR, poly-PA and poly-PR -- via a non-canonical mechanism known as repeat-associated non-ATG (RAN) translation. These dipeptide repeat proteins (DPRs) co-aggregate in the characteristic SQSTM1-positive TARDBP negative inclusions found in FTLD/ALS patients with C9orf72 repeat expansion (PubMed:24132570).</text>
</comment>
<comment type="miscellaneous">
    <molecule>Isoform 1</molecule>
    <text>Encoded by 2 transcripts differing in the 5' non-coding region.</text>
</comment>
<feature type="chain" id="PRO_0000089711" description="Guanine nucleotide exchange factor C9orf72">
    <location>
        <begin position="1"/>
        <end position="481"/>
    </location>
</feature>
<feature type="domain" description="uDENN C9ORF72-type" evidence="2">
    <location>
        <begin position="23"/>
        <end position="194"/>
    </location>
</feature>
<feature type="domain" description="cDENN C9ORF72-type" evidence="2">
    <location>
        <begin position="200"/>
        <end position="343"/>
    </location>
</feature>
<feature type="domain" description="dDENN C9ORF72-type" evidence="2">
    <location>
        <begin position="370"/>
        <end position="464"/>
    </location>
</feature>
<feature type="region of interest" description="Required for the homodimerization of the C9orf72-SMCR8 complex" evidence="19">
    <location>
        <begin position="461"/>
        <end position="481"/>
    </location>
</feature>
<feature type="splice variant" id="VSP_014745" description="In isoform 2." evidence="21">
    <original>N</original>
    <variation>K</variation>
    <location>
        <position position="222"/>
    </location>
</feature>
<feature type="splice variant" id="VSP_014746" description="In isoform 2." evidence="21">
    <location>
        <begin position="223"/>
        <end position="481"/>
    </location>
</feature>
<feature type="sequence variant" id="VAR_050827" description="In dbSNP:rs17769294.">
    <original>N</original>
    <variation>S</variation>
    <location>
        <position position="207"/>
    </location>
</feature>
<feature type="strand" evidence="27">
    <location>
        <begin position="14"/>
        <end position="17"/>
    </location>
</feature>
<feature type="strand" evidence="28">
    <location>
        <begin position="20"/>
        <end position="23"/>
    </location>
</feature>
<feature type="strand" evidence="27">
    <location>
        <begin position="44"/>
        <end position="47"/>
    </location>
</feature>
<feature type="helix" evidence="27">
    <location>
        <begin position="57"/>
        <end position="67"/>
    </location>
</feature>
<feature type="strand" evidence="27">
    <location>
        <begin position="81"/>
        <end position="87"/>
    </location>
</feature>
<feature type="turn" evidence="27">
    <location>
        <begin position="88"/>
        <end position="91"/>
    </location>
</feature>
<feature type="strand" evidence="27">
    <location>
        <begin position="92"/>
        <end position="98"/>
    </location>
</feature>
<feature type="strand" evidence="28">
    <location>
        <begin position="102"/>
        <end position="106"/>
    </location>
</feature>
<feature type="strand" evidence="27">
    <location>
        <begin position="111"/>
        <end position="117"/>
    </location>
</feature>
<feature type="turn" evidence="27">
    <location>
        <begin position="122"/>
        <end position="124"/>
    </location>
</feature>
<feature type="helix" evidence="27">
    <location>
        <begin position="125"/>
        <end position="127"/>
    </location>
</feature>
<feature type="helix" evidence="27">
    <location>
        <begin position="128"/>
        <end position="147"/>
    </location>
</feature>
<feature type="turn" evidence="28">
    <location>
        <begin position="155"/>
        <end position="157"/>
    </location>
</feature>
<feature type="helix" evidence="28">
    <location>
        <begin position="168"/>
        <end position="171"/>
    </location>
</feature>
<feature type="helix" evidence="27">
    <location>
        <begin position="174"/>
        <end position="192"/>
    </location>
</feature>
<feature type="helix" evidence="27">
    <location>
        <begin position="201"/>
        <end position="203"/>
    </location>
</feature>
<feature type="strand" evidence="27">
    <location>
        <begin position="208"/>
        <end position="211"/>
    </location>
</feature>
<feature type="strand" evidence="27">
    <location>
        <begin position="213"/>
        <end position="215"/>
    </location>
</feature>
<feature type="helix" evidence="27">
    <location>
        <begin position="216"/>
        <end position="229"/>
    </location>
</feature>
<feature type="turn" evidence="27">
    <location>
        <begin position="230"/>
        <end position="232"/>
    </location>
</feature>
<feature type="strand" evidence="27">
    <location>
        <begin position="234"/>
        <end position="237"/>
    </location>
</feature>
<feature type="strand" evidence="27">
    <location>
        <begin position="239"/>
        <end position="241"/>
    </location>
</feature>
<feature type="helix" evidence="27">
    <location>
        <begin position="242"/>
        <end position="251"/>
    </location>
</feature>
<feature type="helix" evidence="27">
    <location>
        <begin position="252"/>
        <end position="254"/>
    </location>
</feature>
<feature type="helix" evidence="27">
    <location>
        <begin position="257"/>
        <end position="262"/>
    </location>
</feature>
<feature type="strand" evidence="27">
    <location>
        <begin position="268"/>
        <end position="270"/>
    </location>
</feature>
<feature type="strand" evidence="27">
    <location>
        <begin position="279"/>
        <end position="281"/>
    </location>
</feature>
<feature type="helix" evidence="28">
    <location>
        <begin position="285"/>
        <end position="288"/>
    </location>
</feature>
<feature type="helix" evidence="27">
    <location>
        <begin position="295"/>
        <end position="299"/>
    </location>
</feature>
<feature type="strand" evidence="27">
    <location>
        <begin position="301"/>
        <end position="303"/>
    </location>
</feature>
<feature type="strand" evidence="27">
    <location>
        <begin position="306"/>
        <end position="309"/>
    </location>
</feature>
<feature type="turn" evidence="27">
    <location>
        <begin position="310"/>
        <end position="313"/>
    </location>
</feature>
<feature type="strand" evidence="27">
    <location>
        <begin position="314"/>
        <end position="316"/>
    </location>
</feature>
<feature type="helix" evidence="27">
    <location>
        <begin position="321"/>
        <end position="336"/>
    </location>
</feature>
<feature type="helix" evidence="27">
    <location>
        <begin position="376"/>
        <end position="384"/>
    </location>
</feature>
<feature type="helix" evidence="28">
    <location>
        <begin position="385"/>
        <end position="387"/>
    </location>
</feature>
<feature type="helix" evidence="27">
    <location>
        <begin position="394"/>
        <end position="419"/>
    </location>
</feature>
<feature type="strand" evidence="27">
    <location>
        <begin position="422"/>
        <end position="425"/>
    </location>
</feature>
<feature type="helix" evidence="27">
    <location>
        <begin position="430"/>
        <end position="436"/>
    </location>
</feature>
<feature type="helix" evidence="27">
    <location>
        <begin position="442"/>
        <end position="454"/>
    </location>
</feature>
<feature type="helix" evidence="27">
    <location>
        <begin position="459"/>
        <end position="463"/>
    </location>
</feature>
<feature type="turn" evidence="28">
    <location>
        <begin position="465"/>
        <end position="467"/>
    </location>
</feature>
<protein>
    <recommendedName>
        <fullName evidence="24">Guanine nucleotide exchange factor C9orf72</fullName>
    </recommendedName>
</protein>
<name>CI072_HUMAN</name>
<dbReference type="EMBL" id="JN681271">
    <property type="protein sequence ID" value="AET41697.1"/>
    <property type="molecule type" value="mRNA"/>
</dbReference>
<dbReference type="EMBL" id="AK057806">
    <property type="protein sequence ID" value="BAB71583.1"/>
    <property type="molecule type" value="mRNA"/>
</dbReference>
<dbReference type="EMBL" id="AK291425">
    <property type="protein sequence ID" value="BAF84114.1"/>
    <property type="molecule type" value="mRNA"/>
</dbReference>
<dbReference type="EMBL" id="AL451123">
    <property type="status" value="NOT_ANNOTATED_CDS"/>
    <property type="molecule type" value="Genomic_DNA"/>
</dbReference>
<dbReference type="EMBL" id="CH471071">
    <property type="protein sequence ID" value="EAW58561.1"/>
    <property type="molecule type" value="Genomic_DNA"/>
</dbReference>
<dbReference type="EMBL" id="CH471071">
    <property type="protein sequence ID" value="EAW58558.1"/>
    <property type="molecule type" value="Genomic_DNA"/>
</dbReference>
<dbReference type="EMBL" id="CH471071">
    <property type="protein sequence ID" value="EAW58560.1"/>
    <property type="molecule type" value="Genomic_DNA"/>
</dbReference>
<dbReference type="EMBL" id="BC068445">
    <property type="protein sequence ID" value="AAH68445.1"/>
    <property type="molecule type" value="mRNA"/>
</dbReference>
<dbReference type="CCDS" id="CCDS6522.1">
    <molecule id="Q96LT7-1"/>
</dbReference>
<dbReference type="CCDS" id="CCDS6523.1">
    <molecule id="Q96LT7-2"/>
</dbReference>
<dbReference type="RefSeq" id="NP_001242983.1">
    <molecule id="Q96LT7-1"/>
    <property type="nucleotide sequence ID" value="NM_001256054.3"/>
</dbReference>
<dbReference type="RefSeq" id="NP_060795.1">
    <molecule id="Q96LT7-1"/>
    <property type="nucleotide sequence ID" value="NM_018325.5"/>
</dbReference>
<dbReference type="RefSeq" id="NP_659442.2">
    <molecule id="Q96LT7-2"/>
    <property type="nucleotide sequence ID" value="NM_145005.6"/>
</dbReference>
<dbReference type="PDB" id="6LT0">
    <property type="method" value="EM"/>
    <property type="resolution" value="3.20 A"/>
    <property type="chains" value="C/F=1-481"/>
</dbReference>
<dbReference type="PDB" id="6V4U">
    <property type="method" value="EM"/>
    <property type="resolution" value="3.80 A"/>
    <property type="chains" value="A=1-481"/>
</dbReference>
<dbReference type="PDB" id="7MGE">
    <property type="method" value="EM"/>
    <property type="resolution" value="3.94 A"/>
    <property type="chains" value="C=1-481"/>
</dbReference>
<dbReference type="PDB" id="7O2W">
    <property type="method" value="EM"/>
    <property type="chains" value="A=1-481"/>
</dbReference>
<dbReference type="PDBsum" id="6LT0"/>
<dbReference type="PDBsum" id="6V4U"/>
<dbReference type="PDBsum" id="7MGE"/>
<dbReference type="PDBsum" id="7O2W"/>
<dbReference type="EMDB" id="EMD-0966"/>
<dbReference type="EMDB" id="EMD-12700"/>
<dbReference type="EMDB" id="EMD-21048"/>
<dbReference type="EMDB" id="EMD-23827"/>
<dbReference type="SMR" id="Q96LT7"/>
<dbReference type="BioGRID" id="128456">
    <property type="interactions" value="1372"/>
</dbReference>
<dbReference type="ComplexPortal" id="CPX-3961">
    <molecule id="Q96LT7-1"/>
    <property type="entry name" value="C9orf72-SMCR8 complex"/>
</dbReference>
<dbReference type="CORUM" id="Q96LT7"/>
<dbReference type="FunCoup" id="Q96LT7">
    <property type="interactions" value="1975"/>
</dbReference>
<dbReference type="IntAct" id="Q96LT7">
    <property type="interactions" value="111"/>
</dbReference>
<dbReference type="MINT" id="Q96LT7"/>
<dbReference type="STRING" id="9606.ENSP00000482753"/>
<dbReference type="GlyGen" id="Q96LT7">
    <property type="glycosylation" value="1 site, 1 O-linked glycan (1 site)"/>
</dbReference>
<dbReference type="iPTMnet" id="Q96LT7"/>
<dbReference type="PhosphoSitePlus" id="Q96LT7"/>
<dbReference type="BioMuta" id="C9orf72"/>
<dbReference type="DMDM" id="71152412"/>
<dbReference type="jPOST" id="Q96LT7"/>
<dbReference type="MassIVE" id="Q96LT7"/>
<dbReference type="PaxDb" id="9606-ENSP00000482753"/>
<dbReference type="PeptideAtlas" id="Q96LT7"/>
<dbReference type="ProteomicsDB" id="77248">
    <molecule id="Q96LT7-1"/>
</dbReference>
<dbReference type="ProteomicsDB" id="77249">
    <molecule id="Q96LT7-2"/>
</dbReference>
<dbReference type="Pumba" id="Q96LT7"/>
<dbReference type="Antibodypedia" id="10609">
    <property type="antibodies" value="265 antibodies from 32 providers"/>
</dbReference>
<dbReference type="DNASU" id="203228"/>
<dbReference type="Ensembl" id="ENST00000379995.1">
    <molecule id="Q96LT7-2"/>
    <property type="protein sequence ID" value="ENSP00000369331.1"/>
    <property type="gene ID" value="ENSG00000147894.17"/>
</dbReference>
<dbReference type="Ensembl" id="ENST00000379997.7">
    <molecule id="Q96LT7-2"/>
    <property type="protein sequence ID" value="ENSP00000369333.3"/>
    <property type="gene ID" value="ENSG00000147894.17"/>
</dbReference>
<dbReference type="Ensembl" id="ENST00000380003.8">
    <molecule id="Q96LT7-1"/>
    <property type="protein sequence ID" value="ENSP00000369339.3"/>
    <property type="gene ID" value="ENSG00000147894.17"/>
</dbReference>
<dbReference type="Ensembl" id="ENST00000619707.5">
    <molecule id="Q96LT7-1"/>
    <property type="protein sequence ID" value="ENSP00000482753.1"/>
    <property type="gene ID" value="ENSG00000147894.17"/>
</dbReference>
<dbReference type="GeneID" id="203228"/>
<dbReference type="KEGG" id="hsa:203228"/>
<dbReference type="MANE-Select" id="ENST00000380003.8">
    <property type="protein sequence ID" value="ENSP00000369339.3"/>
    <property type="RefSeq nucleotide sequence ID" value="NM_018325.5"/>
    <property type="RefSeq protein sequence ID" value="NP_060795.1"/>
</dbReference>
<dbReference type="UCSC" id="uc003zqq.4">
    <molecule id="Q96LT7-1"/>
    <property type="organism name" value="human"/>
</dbReference>
<dbReference type="AGR" id="HGNC:28337"/>
<dbReference type="CTD" id="203228"/>
<dbReference type="DisGeNET" id="203228"/>
<dbReference type="GeneCards" id="C9orf72"/>
<dbReference type="GeneReviews" id="C9orf72"/>
<dbReference type="HGNC" id="HGNC:28337">
    <property type="gene designation" value="C9orf72"/>
</dbReference>
<dbReference type="HPA" id="ENSG00000147894">
    <property type="expression patterns" value="Low tissue specificity"/>
</dbReference>
<dbReference type="MalaCards" id="C9orf72"/>
<dbReference type="MIM" id="105550">
    <property type="type" value="phenotype"/>
</dbReference>
<dbReference type="MIM" id="614260">
    <property type="type" value="gene"/>
</dbReference>
<dbReference type="neXtProt" id="NX_Q96LT7"/>
<dbReference type="OpenTargets" id="ENSG00000147894"/>
<dbReference type="Orphanet" id="803">
    <property type="disease" value="Amyotrophic lateral sclerosis"/>
</dbReference>
<dbReference type="Orphanet" id="275864">
    <property type="disease" value="Behavioral variant of frontotemporal dementia"/>
</dbReference>
<dbReference type="Orphanet" id="275872">
    <property type="disease" value="Frontotemporal dementia with motor neuron disease"/>
</dbReference>
<dbReference type="Orphanet" id="401901">
    <property type="disease" value="Huntington disease-like syndrome due to C9ORF72 expansions"/>
</dbReference>
<dbReference type="Orphanet" id="100070">
    <property type="disease" value="Progressive non-fluent aphasia"/>
</dbReference>
<dbReference type="Orphanet" id="100069">
    <property type="disease" value="Semantic dementia"/>
</dbReference>
<dbReference type="PharmGKB" id="PA134908144"/>
<dbReference type="VEuPathDB" id="HostDB:ENSG00000147894"/>
<dbReference type="eggNOG" id="ENOG502QSST">
    <property type="taxonomic scope" value="Eukaryota"/>
</dbReference>
<dbReference type="GeneTree" id="ENSGT00390000005644"/>
<dbReference type="HOGENOM" id="CLU_047573_0_0_1"/>
<dbReference type="InParanoid" id="Q96LT7"/>
<dbReference type="OMA" id="QPFYTSV"/>
<dbReference type="OrthoDB" id="10252077at2759"/>
<dbReference type="PAN-GO" id="Q96LT7">
    <property type="GO annotations" value="4 GO annotations based on evolutionary models"/>
</dbReference>
<dbReference type="PhylomeDB" id="Q96LT7"/>
<dbReference type="TreeFam" id="TF313315"/>
<dbReference type="PathwayCommons" id="Q96LT7"/>
<dbReference type="SignaLink" id="Q96LT7"/>
<dbReference type="SIGNOR" id="Q96LT7"/>
<dbReference type="BioGRID-ORCS" id="203228">
    <property type="hits" value="12 hits in 1140 CRISPR screens"/>
</dbReference>
<dbReference type="CD-CODE" id="232F8A39">
    <property type="entry name" value="P-body"/>
</dbReference>
<dbReference type="CD-CODE" id="91857CE7">
    <property type="entry name" value="Nucleolus"/>
</dbReference>
<dbReference type="CD-CODE" id="DEE660B4">
    <property type="entry name" value="Stress granule"/>
</dbReference>
<dbReference type="ChiTaRS" id="C9orf72">
    <property type="organism name" value="human"/>
</dbReference>
<dbReference type="GenomeRNAi" id="203228"/>
<dbReference type="Pharos" id="Q96LT7">
    <property type="development level" value="Tbio"/>
</dbReference>
<dbReference type="PRO" id="PR:Q96LT7"/>
<dbReference type="Proteomes" id="UP000005640">
    <property type="component" value="Chromosome 9"/>
</dbReference>
<dbReference type="RNAct" id="Q96LT7">
    <property type="molecule type" value="protein"/>
</dbReference>
<dbReference type="Bgee" id="ENSG00000147894">
    <property type="expression patterns" value="Expressed in monocyte and 176 other cell types or tissues"/>
</dbReference>
<dbReference type="ExpressionAtlas" id="Q96LT7">
    <property type="expression patterns" value="baseline and differential"/>
</dbReference>
<dbReference type="GO" id="GO:0005776">
    <property type="term" value="C:autophagosome"/>
    <property type="evidence" value="ECO:0000314"/>
    <property type="project" value="UniProtKB"/>
</dbReference>
<dbReference type="GO" id="GO:0044295">
    <property type="term" value="C:axonal growth cone"/>
    <property type="evidence" value="ECO:0000314"/>
    <property type="project" value="UniProtKB"/>
</dbReference>
<dbReference type="GO" id="GO:0005737">
    <property type="term" value="C:cytoplasm"/>
    <property type="evidence" value="ECO:0000314"/>
    <property type="project" value="UniProtKB"/>
</dbReference>
<dbReference type="GO" id="GO:0010494">
    <property type="term" value="C:cytoplasmic stress granule"/>
    <property type="evidence" value="ECO:0000314"/>
    <property type="project" value="UniProtKB"/>
</dbReference>
<dbReference type="GO" id="GO:0005829">
    <property type="term" value="C:cytosol"/>
    <property type="evidence" value="ECO:0000314"/>
    <property type="project" value="HPA"/>
</dbReference>
<dbReference type="GO" id="GO:0030425">
    <property type="term" value="C:dendrite"/>
    <property type="evidence" value="ECO:0000314"/>
    <property type="project" value="UniProtKB"/>
</dbReference>
<dbReference type="GO" id="GO:0005768">
    <property type="term" value="C:endosome"/>
    <property type="evidence" value="ECO:0000314"/>
    <property type="project" value="UniProtKB"/>
</dbReference>
<dbReference type="GO" id="GO:0005615">
    <property type="term" value="C:extracellular space"/>
    <property type="evidence" value="ECO:0000314"/>
    <property type="project" value="UniProtKB"/>
</dbReference>
<dbReference type="GO" id="GO:0090543">
    <property type="term" value="C:Flemming body"/>
    <property type="evidence" value="ECO:0000314"/>
    <property type="project" value="HPA"/>
</dbReference>
<dbReference type="GO" id="GO:0098978">
    <property type="term" value="C:glutamatergic synapse"/>
    <property type="evidence" value="ECO:0007669"/>
    <property type="project" value="Ensembl"/>
</dbReference>
<dbReference type="GO" id="GO:0032045">
    <property type="term" value="C:guanyl-nucleotide exchange factor complex"/>
    <property type="evidence" value="ECO:0000314"/>
    <property type="project" value="HGNC"/>
</dbReference>
<dbReference type="GO" id="GO:0098686">
    <property type="term" value="C:hippocampal mossy fiber to CA3 synapse"/>
    <property type="evidence" value="ECO:0007669"/>
    <property type="project" value="Ensembl"/>
</dbReference>
<dbReference type="GO" id="GO:0043231">
    <property type="term" value="C:intracellular membrane-bounded organelle"/>
    <property type="evidence" value="ECO:0000314"/>
    <property type="project" value="HPA"/>
</dbReference>
<dbReference type="GO" id="GO:0005764">
    <property type="term" value="C:lysosome"/>
    <property type="evidence" value="ECO:0000314"/>
    <property type="project" value="UniProtKB"/>
</dbReference>
<dbReference type="GO" id="GO:0044304">
    <property type="term" value="C:main axon"/>
    <property type="evidence" value="ECO:0000314"/>
    <property type="project" value="UniProtKB"/>
</dbReference>
<dbReference type="GO" id="GO:0031965">
    <property type="term" value="C:nuclear membrane"/>
    <property type="evidence" value="ECO:0000314"/>
    <property type="project" value="UniProtKB"/>
</dbReference>
<dbReference type="GO" id="GO:0005634">
    <property type="term" value="C:nucleus"/>
    <property type="evidence" value="ECO:0000314"/>
    <property type="project" value="UniProtKB"/>
</dbReference>
<dbReference type="GO" id="GO:0000932">
    <property type="term" value="C:P-body"/>
    <property type="evidence" value="ECO:0000314"/>
    <property type="project" value="UniProtKB"/>
</dbReference>
<dbReference type="GO" id="GO:0043204">
    <property type="term" value="C:perikaryon"/>
    <property type="evidence" value="ECO:0000314"/>
    <property type="project" value="UniProtKB"/>
</dbReference>
<dbReference type="GO" id="GO:0098794">
    <property type="term" value="C:postsynapse"/>
    <property type="evidence" value="ECO:0007669"/>
    <property type="project" value="UniProtKB-SubCell"/>
</dbReference>
<dbReference type="GO" id="GO:0099523">
    <property type="term" value="C:presynaptic cytosol"/>
    <property type="evidence" value="ECO:0000314"/>
    <property type="project" value="SynGO"/>
</dbReference>
<dbReference type="GO" id="GO:0005096">
    <property type="term" value="F:GTPase activator activity"/>
    <property type="evidence" value="ECO:0000315"/>
    <property type="project" value="UniProtKB"/>
</dbReference>
<dbReference type="GO" id="GO:0005085">
    <property type="term" value="F:guanyl-nucleotide exchange factor activity"/>
    <property type="evidence" value="ECO:0000314"/>
    <property type="project" value="UniProtKB"/>
</dbReference>
<dbReference type="GO" id="GO:0031267">
    <property type="term" value="F:small GTPase binding"/>
    <property type="evidence" value="ECO:0000314"/>
    <property type="project" value="UniProtKB"/>
</dbReference>
<dbReference type="GO" id="GO:0061909">
    <property type="term" value="P:autophagosome-lysosome fusion"/>
    <property type="evidence" value="ECO:0000315"/>
    <property type="project" value="UniProtKB"/>
</dbReference>
<dbReference type="GO" id="GO:0006914">
    <property type="term" value="P:autophagy"/>
    <property type="evidence" value="ECO:0000315"/>
    <property type="project" value="UniProtKB"/>
</dbReference>
<dbReference type="GO" id="GO:0048675">
    <property type="term" value="P:axon extension"/>
    <property type="evidence" value="ECO:0000315"/>
    <property type="project" value="UniProtKB"/>
</dbReference>
<dbReference type="GO" id="GO:0006897">
    <property type="term" value="P:endocytosis"/>
    <property type="evidence" value="ECO:0000315"/>
    <property type="project" value="UniProtKB"/>
</dbReference>
<dbReference type="GO" id="GO:1902774">
    <property type="term" value="P:late endosome to lysosome transport"/>
    <property type="evidence" value="ECO:0000250"/>
    <property type="project" value="UniProtKB"/>
</dbReference>
<dbReference type="GO" id="GO:0045920">
    <property type="term" value="P:negative regulation of exocytosis"/>
    <property type="evidence" value="ECO:0000303"/>
    <property type="project" value="ComplexPortal"/>
</dbReference>
<dbReference type="GO" id="GO:0050777">
    <property type="term" value="P:negative regulation of immune response"/>
    <property type="evidence" value="ECO:0000303"/>
    <property type="project" value="ComplexPortal"/>
</dbReference>
<dbReference type="GO" id="GO:0001933">
    <property type="term" value="P:negative regulation of protein phosphorylation"/>
    <property type="evidence" value="ECO:0000315"/>
    <property type="project" value="UniProtKB"/>
</dbReference>
<dbReference type="GO" id="GO:0016239">
    <property type="term" value="P:positive regulation of macroautophagy"/>
    <property type="evidence" value="ECO:0000315"/>
    <property type="project" value="UniProtKB"/>
</dbReference>
<dbReference type="GO" id="GO:0110053">
    <property type="term" value="P:regulation of actin filament organization"/>
    <property type="evidence" value="ECO:0000315"/>
    <property type="project" value="UniProtKB"/>
</dbReference>
<dbReference type="GO" id="GO:2000785">
    <property type="term" value="P:regulation of autophagosome assembly"/>
    <property type="evidence" value="ECO:0000315"/>
    <property type="project" value="UniProtKB"/>
</dbReference>
<dbReference type="GO" id="GO:0010506">
    <property type="term" value="P:regulation of autophagy"/>
    <property type="evidence" value="ECO:0000315"/>
    <property type="project" value="UniProtKB"/>
</dbReference>
<dbReference type="GO" id="GO:0032880">
    <property type="term" value="P:regulation of protein localization"/>
    <property type="evidence" value="ECO:0007669"/>
    <property type="project" value="Ensembl"/>
</dbReference>
<dbReference type="GO" id="GO:0098693">
    <property type="term" value="P:regulation of synaptic vesicle cycle"/>
    <property type="evidence" value="ECO:0007669"/>
    <property type="project" value="Ensembl"/>
</dbReference>
<dbReference type="GO" id="GO:1903432">
    <property type="term" value="P:regulation of TORC1 signaling"/>
    <property type="evidence" value="ECO:0000315"/>
    <property type="project" value="UniProtKB"/>
</dbReference>
<dbReference type="GO" id="GO:0034063">
    <property type="term" value="P:stress granule assembly"/>
    <property type="evidence" value="ECO:0000315"/>
    <property type="project" value="UniProtKB"/>
</dbReference>
<dbReference type="InterPro" id="IPR027819">
    <property type="entry name" value="C9orf72"/>
</dbReference>
<dbReference type="PANTHER" id="PTHR31855">
    <property type="entry name" value="GUANINE NUCLEOTIDE EXCHANGE C9ORF72"/>
    <property type="match status" value="1"/>
</dbReference>
<dbReference type="PANTHER" id="PTHR31855:SF2">
    <property type="entry name" value="GUANINE NUCLEOTIDE EXCHANGE FACTOR C9ORF72"/>
    <property type="match status" value="1"/>
</dbReference>
<dbReference type="Pfam" id="PF15019">
    <property type="entry name" value="C9orf72-like"/>
    <property type="match status" value="1"/>
</dbReference>
<dbReference type="PROSITE" id="PS51835">
    <property type="entry name" value="DENN_C9ORF72"/>
    <property type="match status" value="1"/>
</dbReference>
<sequence>MSTLCPPPSPAVAKTEIALSGKSPLLAATFAYWDNILGPRVRHIWAPKTEQVLLSDGEITFLANHTLNGEILRNAESGAIDVKFFVLSEKGVIIVSLIFDGNWNGDRSTYGLSIILPQTELSFYLPLHRVCVDRLTHIIRKGRIWMHKERQENVQKIILEGTERMEDQGQSIIPMLTGEVIPVMELLSSMKSHSVPEEIDIADTVLNDDDIGDSCHEGFLLNAISSHLQTCGCSVVVGSSAEKVNKIVRTLCLFLTPAERKCSRLCEAESSFKYESGLFVQGLLKDSTGSFVLPFRQVMYAPYPTTHIDVDVNTVKQMPPCHEHIYNQRRYMRSELTAFWRATSEEDMAQDTIIYTDESFTPDLNIFQDVLHRDTLVKAFLDQVFQLKPGLSLRSTFLAQFLLVLHRKALTLIKYIEDDTQKGKKPFKSLRNLKIDLDLTAEGDLNIIMALAEKIKPGLHSFIFGRPFYTSVQERDVLMTF</sequence>